<keyword id="KW-0004">4Fe-4S</keyword>
<keyword id="KW-0408">Iron</keyword>
<keyword id="KW-0411">Iron-sulfur</keyword>
<keyword id="KW-0414">Isoprene biosynthesis</keyword>
<keyword id="KW-0479">Metal-binding</keyword>
<keyword id="KW-0560">Oxidoreductase</keyword>
<keyword id="KW-1185">Reference proteome</keyword>
<feature type="chain" id="PRO_0000128890" description="4-hydroxy-3-methylbut-2-enyl diphosphate reductase">
    <location>
        <begin position="1"/>
        <end position="314"/>
    </location>
</feature>
<feature type="active site" description="Proton donor" evidence="1">
    <location>
        <position position="126"/>
    </location>
</feature>
<feature type="binding site" evidence="1">
    <location>
        <position position="12"/>
    </location>
    <ligand>
        <name>[4Fe-4S] cluster</name>
        <dbReference type="ChEBI" id="CHEBI:49883"/>
    </ligand>
</feature>
<feature type="binding site" evidence="1">
    <location>
        <position position="41"/>
    </location>
    <ligand>
        <name>(2E)-4-hydroxy-3-methylbut-2-enyl diphosphate</name>
        <dbReference type="ChEBI" id="CHEBI:128753"/>
    </ligand>
</feature>
<feature type="binding site" evidence="1">
    <location>
        <position position="41"/>
    </location>
    <ligand>
        <name>dimethylallyl diphosphate</name>
        <dbReference type="ChEBI" id="CHEBI:57623"/>
    </ligand>
</feature>
<feature type="binding site" evidence="1">
    <location>
        <position position="41"/>
    </location>
    <ligand>
        <name>isopentenyl diphosphate</name>
        <dbReference type="ChEBI" id="CHEBI:128769"/>
    </ligand>
</feature>
<feature type="binding site" evidence="1">
    <location>
        <position position="74"/>
    </location>
    <ligand>
        <name>(2E)-4-hydroxy-3-methylbut-2-enyl diphosphate</name>
        <dbReference type="ChEBI" id="CHEBI:128753"/>
    </ligand>
</feature>
<feature type="binding site" evidence="1">
    <location>
        <position position="74"/>
    </location>
    <ligand>
        <name>dimethylallyl diphosphate</name>
        <dbReference type="ChEBI" id="CHEBI:57623"/>
    </ligand>
</feature>
<feature type="binding site" evidence="1">
    <location>
        <position position="74"/>
    </location>
    <ligand>
        <name>isopentenyl diphosphate</name>
        <dbReference type="ChEBI" id="CHEBI:128769"/>
    </ligand>
</feature>
<feature type="binding site" evidence="1">
    <location>
        <position position="96"/>
    </location>
    <ligand>
        <name>[4Fe-4S] cluster</name>
        <dbReference type="ChEBI" id="CHEBI:49883"/>
    </ligand>
</feature>
<feature type="binding site" evidence="1">
    <location>
        <position position="124"/>
    </location>
    <ligand>
        <name>(2E)-4-hydroxy-3-methylbut-2-enyl diphosphate</name>
        <dbReference type="ChEBI" id="CHEBI:128753"/>
    </ligand>
</feature>
<feature type="binding site" evidence="1">
    <location>
        <position position="124"/>
    </location>
    <ligand>
        <name>dimethylallyl diphosphate</name>
        <dbReference type="ChEBI" id="CHEBI:57623"/>
    </ligand>
</feature>
<feature type="binding site" evidence="1">
    <location>
        <position position="124"/>
    </location>
    <ligand>
        <name>isopentenyl diphosphate</name>
        <dbReference type="ChEBI" id="CHEBI:128769"/>
    </ligand>
</feature>
<feature type="binding site" evidence="1">
    <location>
        <position position="167"/>
    </location>
    <ligand>
        <name>(2E)-4-hydroxy-3-methylbut-2-enyl diphosphate</name>
        <dbReference type="ChEBI" id="CHEBI:128753"/>
    </ligand>
</feature>
<feature type="binding site" evidence="1">
    <location>
        <position position="197"/>
    </location>
    <ligand>
        <name>[4Fe-4S] cluster</name>
        <dbReference type="ChEBI" id="CHEBI:49883"/>
    </ligand>
</feature>
<feature type="binding site" evidence="1">
    <location>
        <position position="225"/>
    </location>
    <ligand>
        <name>(2E)-4-hydroxy-3-methylbut-2-enyl diphosphate</name>
        <dbReference type="ChEBI" id="CHEBI:128753"/>
    </ligand>
</feature>
<feature type="binding site" evidence="1">
    <location>
        <position position="225"/>
    </location>
    <ligand>
        <name>dimethylallyl diphosphate</name>
        <dbReference type="ChEBI" id="CHEBI:57623"/>
    </ligand>
</feature>
<feature type="binding site" evidence="1">
    <location>
        <position position="225"/>
    </location>
    <ligand>
        <name>isopentenyl diphosphate</name>
        <dbReference type="ChEBI" id="CHEBI:128769"/>
    </ligand>
</feature>
<feature type="binding site" evidence="1">
    <location>
        <position position="226"/>
    </location>
    <ligand>
        <name>(2E)-4-hydroxy-3-methylbut-2-enyl diphosphate</name>
        <dbReference type="ChEBI" id="CHEBI:128753"/>
    </ligand>
</feature>
<feature type="binding site" evidence="1">
    <location>
        <position position="226"/>
    </location>
    <ligand>
        <name>dimethylallyl diphosphate</name>
        <dbReference type="ChEBI" id="CHEBI:57623"/>
    </ligand>
</feature>
<feature type="binding site" evidence="1">
    <location>
        <position position="226"/>
    </location>
    <ligand>
        <name>isopentenyl diphosphate</name>
        <dbReference type="ChEBI" id="CHEBI:128769"/>
    </ligand>
</feature>
<feature type="binding site" evidence="1">
    <location>
        <position position="227"/>
    </location>
    <ligand>
        <name>(2E)-4-hydroxy-3-methylbut-2-enyl diphosphate</name>
        <dbReference type="ChEBI" id="CHEBI:128753"/>
    </ligand>
</feature>
<feature type="binding site" evidence="1">
    <location>
        <position position="227"/>
    </location>
    <ligand>
        <name>dimethylallyl diphosphate</name>
        <dbReference type="ChEBI" id="CHEBI:57623"/>
    </ligand>
</feature>
<feature type="binding site" evidence="1">
    <location>
        <position position="227"/>
    </location>
    <ligand>
        <name>isopentenyl diphosphate</name>
        <dbReference type="ChEBI" id="CHEBI:128769"/>
    </ligand>
</feature>
<feature type="binding site" evidence="1">
    <location>
        <position position="269"/>
    </location>
    <ligand>
        <name>(2E)-4-hydroxy-3-methylbut-2-enyl diphosphate</name>
        <dbReference type="ChEBI" id="CHEBI:128753"/>
    </ligand>
</feature>
<feature type="binding site" evidence="1">
    <location>
        <position position="269"/>
    </location>
    <ligand>
        <name>dimethylallyl diphosphate</name>
        <dbReference type="ChEBI" id="CHEBI:57623"/>
    </ligand>
</feature>
<feature type="binding site" evidence="1">
    <location>
        <position position="269"/>
    </location>
    <ligand>
        <name>isopentenyl diphosphate</name>
        <dbReference type="ChEBI" id="CHEBI:128769"/>
    </ligand>
</feature>
<evidence type="ECO:0000255" key="1">
    <source>
        <dbReference type="HAMAP-Rule" id="MF_00191"/>
    </source>
</evidence>
<name>ISPH_ALIF1</name>
<organism>
    <name type="scientific">Aliivibrio fischeri (strain ATCC 700601 / ES114)</name>
    <name type="common">Vibrio fischeri</name>
    <dbReference type="NCBI Taxonomy" id="312309"/>
    <lineage>
        <taxon>Bacteria</taxon>
        <taxon>Pseudomonadati</taxon>
        <taxon>Pseudomonadota</taxon>
        <taxon>Gammaproteobacteria</taxon>
        <taxon>Vibrionales</taxon>
        <taxon>Vibrionaceae</taxon>
        <taxon>Aliivibrio</taxon>
    </lineage>
</organism>
<protein>
    <recommendedName>
        <fullName evidence="1">4-hydroxy-3-methylbut-2-enyl diphosphate reductase</fullName>
        <shortName evidence="1">HMBPP reductase</shortName>
        <ecNumber evidence="1">1.17.7.4</ecNumber>
    </recommendedName>
</protein>
<gene>
    <name evidence="1" type="primary">ispH</name>
    <name type="ordered locus">VF_0470</name>
</gene>
<reference key="1">
    <citation type="journal article" date="2005" name="Proc. Natl. Acad. Sci. U.S.A.">
        <title>Complete genome sequence of Vibrio fischeri: a symbiotic bacterium with pathogenic congeners.</title>
        <authorList>
            <person name="Ruby E.G."/>
            <person name="Urbanowski M."/>
            <person name="Campbell J."/>
            <person name="Dunn A."/>
            <person name="Faini M."/>
            <person name="Gunsalus R."/>
            <person name="Lostroh P."/>
            <person name="Lupp C."/>
            <person name="McCann J."/>
            <person name="Millikan D."/>
            <person name="Schaefer A."/>
            <person name="Stabb E."/>
            <person name="Stevens A."/>
            <person name="Visick K."/>
            <person name="Whistler C."/>
            <person name="Greenberg E.P."/>
        </authorList>
    </citation>
    <scope>NUCLEOTIDE SEQUENCE [LARGE SCALE GENOMIC DNA]</scope>
    <source>
        <strain>ATCC 700601 / ES114</strain>
    </source>
</reference>
<accession>Q5E7N1</accession>
<comment type="function">
    <text evidence="1">Catalyzes the conversion of 1-hydroxy-2-methyl-2-(E)-butenyl 4-diphosphate (HMBPP) into a mixture of isopentenyl diphosphate (IPP) and dimethylallyl diphosphate (DMAPP). Acts in the terminal step of the DOXP/MEP pathway for isoprenoid precursor biosynthesis.</text>
</comment>
<comment type="catalytic activity">
    <reaction evidence="1">
        <text>isopentenyl diphosphate + 2 oxidized [2Fe-2S]-[ferredoxin] + H2O = (2E)-4-hydroxy-3-methylbut-2-enyl diphosphate + 2 reduced [2Fe-2S]-[ferredoxin] + 2 H(+)</text>
        <dbReference type="Rhea" id="RHEA:24488"/>
        <dbReference type="Rhea" id="RHEA-COMP:10000"/>
        <dbReference type="Rhea" id="RHEA-COMP:10001"/>
        <dbReference type="ChEBI" id="CHEBI:15377"/>
        <dbReference type="ChEBI" id="CHEBI:15378"/>
        <dbReference type="ChEBI" id="CHEBI:33737"/>
        <dbReference type="ChEBI" id="CHEBI:33738"/>
        <dbReference type="ChEBI" id="CHEBI:128753"/>
        <dbReference type="ChEBI" id="CHEBI:128769"/>
        <dbReference type="EC" id="1.17.7.4"/>
    </reaction>
</comment>
<comment type="catalytic activity">
    <reaction evidence="1">
        <text>dimethylallyl diphosphate + 2 oxidized [2Fe-2S]-[ferredoxin] + H2O = (2E)-4-hydroxy-3-methylbut-2-enyl diphosphate + 2 reduced [2Fe-2S]-[ferredoxin] + 2 H(+)</text>
        <dbReference type="Rhea" id="RHEA:24825"/>
        <dbReference type="Rhea" id="RHEA-COMP:10000"/>
        <dbReference type="Rhea" id="RHEA-COMP:10001"/>
        <dbReference type="ChEBI" id="CHEBI:15377"/>
        <dbReference type="ChEBI" id="CHEBI:15378"/>
        <dbReference type="ChEBI" id="CHEBI:33737"/>
        <dbReference type="ChEBI" id="CHEBI:33738"/>
        <dbReference type="ChEBI" id="CHEBI:57623"/>
        <dbReference type="ChEBI" id="CHEBI:128753"/>
        <dbReference type="EC" id="1.17.7.4"/>
    </reaction>
</comment>
<comment type="cofactor">
    <cofactor evidence="1">
        <name>[4Fe-4S] cluster</name>
        <dbReference type="ChEBI" id="CHEBI:49883"/>
    </cofactor>
    <text evidence="1">Binds 1 [4Fe-4S] cluster per subunit.</text>
</comment>
<comment type="pathway">
    <text evidence="1">Isoprenoid biosynthesis; dimethylallyl diphosphate biosynthesis; dimethylallyl diphosphate from (2E)-4-hydroxy-3-methylbutenyl diphosphate: step 1/1.</text>
</comment>
<comment type="pathway">
    <text evidence="1">Isoprenoid biosynthesis; isopentenyl diphosphate biosynthesis via DXP pathway; isopentenyl diphosphate from 1-deoxy-D-xylulose 5-phosphate: step 6/6.</text>
</comment>
<comment type="similarity">
    <text evidence="1">Belongs to the IspH family.</text>
</comment>
<sequence length="314" mass="34820">MKIVLANPRGFCAGVDRAISIVERALELYEAPIYVRHEVVHNRFVVEGLKQRGAIFVEELHEVPDDNIVIFSAHGVSQAVRKEAKERALTVFDATCPLVTKVHMEVARASKKNIEVVLIGHAGHPEVEGTMGQYASDSAGMYLVETPDDVIKLNVKDPSNLHYVSQTTLSVDETADVIDELRRVFPEIQGPRKDDICYATQNRQDAVRDMASQVDVMIVVGSKNSSNSNRLRELSEKLGTTSYLIDCPEDLKEEWLTEQTKVGVTAGASAPEELVNQIIEQVKAFGGTAVEELTGREENMFFEVPKELQIKTVS</sequence>
<dbReference type="EC" id="1.17.7.4" evidence="1"/>
<dbReference type="EMBL" id="CP000020">
    <property type="protein sequence ID" value="AAW84965.1"/>
    <property type="molecule type" value="Genomic_DNA"/>
</dbReference>
<dbReference type="RefSeq" id="WP_011261246.1">
    <property type="nucleotide sequence ID" value="NC_006840.2"/>
</dbReference>
<dbReference type="RefSeq" id="YP_203853.1">
    <property type="nucleotide sequence ID" value="NC_006840.2"/>
</dbReference>
<dbReference type="SMR" id="Q5E7N1"/>
<dbReference type="STRING" id="312309.VF_0470"/>
<dbReference type="EnsemblBacteria" id="AAW84965">
    <property type="protein sequence ID" value="AAW84965"/>
    <property type="gene ID" value="VF_0470"/>
</dbReference>
<dbReference type="GeneID" id="54163106"/>
<dbReference type="KEGG" id="vfi:VF_0470"/>
<dbReference type="PATRIC" id="fig|312309.11.peg.460"/>
<dbReference type="eggNOG" id="COG0761">
    <property type="taxonomic scope" value="Bacteria"/>
</dbReference>
<dbReference type="HOGENOM" id="CLU_027486_1_1_6"/>
<dbReference type="OrthoDB" id="9804068at2"/>
<dbReference type="UniPathway" id="UPA00056">
    <property type="reaction ID" value="UER00097"/>
</dbReference>
<dbReference type="UniPathway" id="UPA00059">
    <property type="reaction ID" value="UER00105"/>
</dbReference>
<dbReference type="Proteomes" id="UP000000537">
    <property type="component" value="Chromosome I"/>
</dbReference>
<dbReference type="GO" id="GO:0051539">
    <property type="term" value="F:4 iron, 4 sulfur cluster binding"/>
    <property type="evidence" value="ECO:0007669"/>
    <property type="project" value="UniProtKB-UniRule"/>
</dbReference>
<dbReference type="GO" id="GO:0051745">
    <property type="term" value="F:4-hydroxy-3-methylbut-2-enyl diphosphate reductase activity"/>
    <property type="evidence" value="ECO:0007669"/>
    <property type="project" value="UniProtKB-UniRule"/>
</dbReference>
<dbReference type="GO" id="GO:0046872">
    <property type="term" value="F:metal ion binding"/>
    <property type="evidence" value="ECO:0007669"/>
    <property type="project" value="UniProtKB-KW"/>
</dbReference>
<dbReference type="GO" id="GO:0050992">
    <property type="term" value="P:dimethylallyl diphosphate biosynthetic process"/>
    <property type="evidence" value="ECO:0007669"/>
    <property type="project" value="UniProtKB-UniRule"/>
</dbReference>
<dbReference type="GO" id="GO:0019288">
    <property type="term" value="P:isopentenyl diphosphate biosynthetic process, methylerythritol 4-phosphate pathway"/>
    <property type="evidence" value="ECO:0007669"/>
    <property type="project" value="UniProtKB-UniRule"/>
</dbReference>
<dbReference type="GO" id="GO:0016114">
    <property type="term" value="P:terpenoid biosynthetic process"/>
    <property type="evidence" value="ECO:0007669"/>
    <property type="project" value="UniProtKB-UniRule"/>
</dbReference>
<dbReference type="CDD" id="cd13944">
    <property type="entry name" value="lytB_ispH"/>
    <property type="match status" value="1"/>
</dbReference>
<dbReference type="Gene3D" id="3.40.50.11270">
    <property type="match status" value="1"/>
</dbReference>
<dbReference type="Gene3D" id="3.40.1010.20">
    <property type="entry name" value="4-hydroxy-3-methylbut-2-enyl diphosphate reductase, catalytic domain"/>
    <property type="match status" value="2"/>
</dbReference>
<dbReference type="HAMAP" id="MF_00191">
    <property type="entry name" value="IspH"/>
    <property type="match status" value="1"/>
</dbReference>
<dbReference type="InterPro" id="IPR003451">
    <property type="entry name" value="LytB/IspH"/>
</dbReference>
<dbReference type="NCBIfam" id="TIGR00216">
    <property type="entry name" value="ispH_lytB"/>
    <property type="match status" value="1"/>
</dbReference>
<dbReference type="NCBIfam" id="NF002188">
    <property type="entry name" value="PRK01045.1-2"/>
    <property type="match status" value="1"/>
</dbReference>
<dbReference type="NCBIfam" id="NF002190">
    <property type="entry name" value="PRK01045.1-4"/>
    <property type="match status" value="1"/>
</dbReference>
<dbReference type="PANTHER" id="PTHR30426">
    <property type="entry name" value="4-HYDROXY-3-METHYLBUT-2-ENYL DIPHOSPHATE REDUCTASE"/>
    <property type="match status" value="1"/>
</dbReference>
<dbReference type="PANTHER" id="PTHR30426:SF0">
    <property type="entry name" value="4-HYDROXY-3-METHYLBUT-2-ENYL DIPHOSPHATE REDUCTASE"/>
    <property type="match status" value="1"/>
</dbReference>
<dbReference type="Pfam" id="PF02401">
    <property type="entry name" value="LYTB"/>
    <property type="match status" value="1"/>
</dbReference>
<proteinExistence type="inferred from homology"/>